<accession>Q63691</accession>
<accession>Q6GT04</accession>
<proteinExistence type="evidence at transcript level"/>
<keyword id="KW-1003">Cell membrane</keyword>
<keyword id="KW-1015">Disulfide bond</keyword>
<keyword id="KW-0325">Glycoprotein</keyword>
<keyword id="KW-0333">Golgi apparatus</keyword>
<keyword id="KW-0336">GPI-anchor</keyword>
<keyword id="KW-0391">Immunity</keyword>
<keyword id="KW-0395">Inflammatory response</keyword>
<keyword id="KW-0399">Innate immunity</keyword>
<keyword id="KW-0433">Leucine-rich repeat</keyword>
<keyword id="KW-0449">Lipoprotein</keyword>
<keyword id="KW-0472">Membrane</keyword>
<keyword id="KW-1185">Reference proteome</keyword>
<keyword id="KW-0677">Repeat</keyword>
<keyword id="KW-0964">Secreted</keyword>
<keyword id="KW-0732">Signal</keyword>
<evidence type="ECO:0000250" key="1">
    <source>
        <dbReference type="UniProtKB" id="P08571"/>
    </source>
</evidence>
<evidence type="ECO:0000250" key="2">
    <source>
        <dbReference type="UniProtKB" id="P10810"/>
    </source>
</evidence>
<evidence type="ECO:0000255" key="3"/>
<evidence type="ECO:0000269" key="4">
    <source>
    </source>
</evidence>
<evidence type="ECO:0000305" key="5"/>
<reference key="1">
    <citation type="journal article" date="1996" name="J. Neuroimmunol.">
        <title>CD14 mediate endotoxin induction of nitric oxide synthase in cultured brain glial cells.</title>
        <authorList>
            <person name="Galea E."/>
            <person name="Reis D.J."/>
            <person name="Fox E.S."/>
            <person name="Xu H."/>
            <person name="Feinstein D.L."/>
        </authorList>
    </citation>
    <scope>NUCLEOTIDE SEQUENCE [MRNA]</scope>
    <scope>TISSUE SPECIFICITY</scope>
    <scope>INDUCTION BY BACTERIAL LIPOPOLYSACCHARIDE</scope>
    <source>
        <tissue>Spleen</tissue>
    </source>
</reference>
<reference key="2">
    <citation type="journal article" date="1997" name="J. Leukoc. Biol.">
        <title>Primary structure of rat CD14 and characteristics of rat CD14, cytokine, and NO synthase mRNA expression in mononuclear phagocyte system cells in response to LPS.</title>
        <authorList>
            <person name="Takai N."/>
            <person name="Kataoka M."/>
            <person name="Higuchi Y."/>
            <person name="Matsuura K."/>
            <person name="Yamamoto S."/>
        </authorList>
    </citation>
    <scope>NUCLEOTIDE SEQUENCE [MRNA]</scope>
</reference>
<reference key="3">
    <citation type="journal article" date="1998" name="Infect. Immun.">
        <title>Expression of CD14 by hepatocytes: upregulation by cytokines during endotoxemia.</title>
        <authorList>
            <person name="Liu S."/>
            <person name="Khemlani L.S."/>
            <person name="Shapiro R.A."/>
            <person name="Johnson M.L."/>
            <person name="Liu K."/>
            <person name="Geller D.A."/>
            <person name="Watkins S.C."/>
            <person name="Goyert S.M."/>
            <person name="Billiar T.R."/>
        </authorList>
    </citation>
    <scope>NUCLEOTIDE SEQUENCE [MRNA]</scope>
    <source>
        <tissue>Liver</tissue>
    </source>
</reference>
<reference key="4">
    <citation type="journal article" date="2004" name="Genome Res.">
        <title>The status, quality, and expansion of the NIH full-length cDNA project: the Mammalian Gene Collection (MGC).</title>
        <authorList>
            <consortium name="The MGC Project Team"/>
        </authorList>
    </citation>
    <scope>NUCLEOTIDE SEQUENCE [LARGE SCALE MRNA]</scope>
    <source>
        <tissue>Prostate</tissue>
    </source>
</reference>
<name>CD14_RAT</name>
<sequence length="372" mass="40054">MKLMLGLLLLPLTLVHASPATPEPCELDQDEESVRCYCNFSDPQPNWSSAFLCAGAEDVEFYGGGRSLEYLLKRVDTEANLGQYTDIIRSLPLKRLTVRSARVPTQILFGTLRVLGYSGLRELTLENLEVTGTALSPLLDATGPDLNTLSLRNVSWATTDTWLAELQQWLKPGLKVLSIAQAHSLNFSCKQVGVFPALATLDLSDNPELGEKGLISALCPHKFPTLQVLALRNAGMETTSGVCSALAAARVPLQALDLSHNSLRDTAGTPSCDWPSQLNSLNLSFTGLEHVPKGLPAKLSVLDLSYNRLDRKPRPEELPEVGSLSLTGNPFLHSESQSEAYNSGVVIATALSPGSAGLSGTLALLLGHRLFV</sequence>
<organism>
    <name type="scientific">Rattus norvegicus</name>
    <name type="common">Rat</name>
    <dbReference type="NCBI Taxonomy" id="10116"/>
    <lineage>
        <taxon>Eukaryota</taxon>
        <taxon>Metazoa</taxon>
        <taxon>Chordata</taxon>
        <taxon>Craniata</taxon>
        <taxon>Vertebrata</taxon>
        <taxon>Euteleostomi</taxon>
        <taxon>Mammalia</taxon>
        <taxon>Eutheria</taxon>
        <taxon>Euarchontoglires</taxon>
        <taxon>Glires</taxon>
        <taxon>Rodentia</taxon>
        <taxon>Myomorpha</taxon>
        <taxon>Muroidea</taxon>
        <taxon>Muridae</taxon>
        <taxon>Murinae</taxon>
        <taxon>Rattus</taxon>
    </lineage>
</organism>
<comment type="function">
    <text evidence="1 2">Coreceptor for bacterial lipopolysaccharide. In concert with LBP, binds to monomeric lipopolysaccharide and delivers it to the LY96/TLR4 complex, thereby mediating the innate immune response to bacterial lipopolysaccharide (LPS). Acts via MyD88, TIRAP and TRAF6, leading to NF-kappa-B activation, cytokine secretion and the inflammatory response. Acts as a coreceptor for TLR2:TLR6 heterodimer in response to diacylated lipopeptides and for TLR2:TLR1 heterodimer in response to triacylated lipopeptides, these clusters trigger signaling from the cell surface and subsequently are targeted to the Golgi in a lipid-raft dependent pathway. Binds electronegative LDL (LDL(-)) and mediates the cytokine release induced by LDL(-) (By similarity).</text>
</comment>
<comment type="subunit">
    <text evidence="1 2">Belongs to the lipopolysaccharide (LPS) receptor, a multi-protein complex containing at least CD14, LY96 and TLR4. Interacts with LPS-bound LPB. Interacts with LPAR1. Interacts with the TLR2:TLR6 or TLR2:TLR1 heterodimers; upon interaction with ligands such as diacylated lipopeptides and triacylated lipopeptides, respectively. Interacts with MYO18A. Interacts with FSTL1.</text>
</comment>
<comment type="subcellular location">
    <subcellularLocation>
        <location evidence="1">Cell membrane</location>
        <topology evidence="1">Lipid-anchor</topology>
        <topology evidence="1">GPI-anchor</topology>
    </subcellularLocation>
    <subcellularLocation>
        <location evidence="1">Secreted</location>
    </subcellularLocation>
    <subcellularLocation>
        <location evidence="1">Membrane raft</location>
    </subcellularLocation>
    <subcellularLocation>
        <location evidence="1">Golgi apparatus</location>
    </subcellularLocation>
    <text evidence="1">Soluble, secreted forms seem to exist. They may arise by cleavage of the GPI anchor.</text>
</comment>
<comment type="tissue specificity">
    <text evidence="4">Detected in macrophages and peripheral blood monocytes.</text>
</comment>
<comment type="induction">
    <text evidence="4">Up-regulated in Kuppfer cells exposed to bacterial lipopolysaccharide (LPS).</text>
</comment>
<comment type="domain">
    <text evidence="2">The C-terminal leucine-rich repeat (LRR) region is required for responses to smooth LPS.</text>
</comment>
<protein>
    <recommendedName>
        <fullName>Monocyte differentiation antigen CD14</fullName>
    </recommendedName>
    <alternativeName>
        <fullName>Myeloid cell-specific leucine-rich glycoprotein</fullName>
    </alternativeName>
    <cdAntigenName>CD14</cdAntigenName>
</protein>
<feature type="signal peptide" evidence="3">
    <location>
        <begin position="1"/>
        <end position="17"/>
    </location>
</feature>
<feature type="chain" id="PRO_0000020891" description="Monocyte differentiation antigen CD14">
    <location>
        <begin position="18"/>
        <end position="342"/>
    </location>
</feature>
<feature type="propeptide" id="PRO_0000020892" description="Removed in mature form" evidence="3">
    <location>
        <begin position="343"/>
        <end position="372"/>
    </location>
</feature>
<feature type="repeat" description="LRR 1">
    <location>
        <begin position="57"/>
        <end position="84"/>
    </location>
</feature>
<feature type="repeat" description="LRR 2">
    <location>
        <begin position="85"/>
        <end position="120"/>
    </location>
</feature>
<feature type="repeat" description="LRR 3">
    <location>
        <begin position="121"/>
        <end position="146"/>
    </location>
</feature>
<feature type="repeat" description="LRR 4">
    <location>
        <begin position="147"/>
        <end position="174"/>
    </location>
</feature>
<feature type="repeat" description="LRR 5">
    <location>
        <begin position="175"/>
        <end position="198"/>
    </location>
</feature>
<feature type="repeat" description="LRR 6">
    <location>
        <begin position="199"/>
        <end position="226"/>
    </location>
</feature>
<feature type="repeat" description="LRR 7">
    <location>
        <begin position="227"/>
        <end position="253"/>
    </location>
</feature>
<feature type="repeat" description="LRR 8">
    <location>
        <begin position="254"/>
        <end position="278"/>
    </location>
</feature>
<feature type="repeat" description="LRR 9">
    <location>
        <begin position="279"/>
        <end position="299"/>
    </location>
</feature>
<feature type="repeat" description="LRR 10">
    <location>
        <begin position="300"/>
        <end position="321"/>
    </location>
</feature>
<feature type="repeat" description="LRR 11">
    <location>
        <begin position="322"/>
        <end position="346"/>
    </location>
</feature>
<feature type="region of interest" description="Required for response to bacterial lipopolysaccharide (LPS)" evidence="2">
    <location>
        <begin position="290"/>
        <end position="372"/>
    </location>
</feature>
<feature type="lipid moiety-binding region" description="GPI-anchor amidated asparagine" evidence="3">
    <location>
        <position position="342"/>
    </location>
</feature>
<feature type="glycosylation site" description="N-linked (GlcNAc...) asparagine" evidence="3">
    <location>
        <position position="39"/>
    </location>
</feature>
<feature type="glycosylation site" description="N-linked (GlcNAc...) asparagine" evidence="3">
    <location>
        <position position="46"/>
    </location>
</feature>
<feature type="glycosylation site" description="N-linked (GlcNAc...) asparagine" evidence="3">
    <location>
        <position position="153"/>
    </location>
</feature>
<feature type="glycosylation site" description="N-linked (GlcNAc...) asparagine" evidence="3">
    <location>
        <position position="186"/>
    </location>
</feature>
<feature type="glycosylation site" description="N-linked (GlcNAc...) asparagine" evidence="3">
    <location>
        <position position="282"/>
    </location>
</feature>
<feature type="disulfide bond" evidence="1">
    <location>
        <begin position="25"/>
        <end position="38"/>
    </location>
</feature>
<feature type="disulfide bond" evidence="1">
    <location>
        <begin position="36"/>
        <end position="53"/>
    </location>
</feature>
<feature type="disulfide bond" evidence="1">
    <location>
        <begin position="189"/>
        <end position="219"/>
    </location>
</feature>
<feature type="disulfide bond" evidence="1">
    <location>
        <begin position="243"/>
        <end position="272"/>
    </location>
</feature>
<feature type="sequence conflict" description="In Ref. 1; AAB01154." evidence="5" ref="1">
    <location>
        <position position="56"/>
    </location>
</feature>
<feature type="sequence conflict" description="In Ref. 1; AAB01154." evidence="5" ref="1">
    <original>P</original>
    <variation>S</variation>
    <location>
        <position position="220"/>
    </location>
</feature>
<feature type="sequence conflict" description="In Ref. 1; AAB01154." evidence="5" ref="1">
    <original>T</original>
    <variation>A</variation>
    <location>
        <position position="269"/>
    </location>
</feature>
<dbReference type="EMBL" id="U51804">
    <property type="protein sequence ID" value="AAB01154.1"/>
    <property type="molecule type" value="mRNA"/>
</dbReference>
<dbReference type="EMBL" id="AF087943">
    <property type="protein sequence ID" value="AAC35371.1"/>
    <property type="molecule type" value="mRNA"/>
</dbReference>
<dbReference type="EMBL" id="BC061733">
    <property type="protein sequence ID" value="AAH61733.1"/>
    <property type="molecule type" value="mRNA"/>
</dbReference>
<dbReference type="RefSeq" id="NP_068512.1">
    <property type="nucleotide sequence ID" value="NM_021744.1"/>
</dbReference>
<dbReference type="SMR" id="Q63691"/>
<dbReference type="FunCoup" id="Q63691">
    <property type="interactions" value="609"/>
</dbReference>
<dbReference type="IntAct" id="Q63691">
    <property type="interactions" value="2"/>
</dbReference>
<dbReference type="STRING" id="10116.ENSRNOP00000023977"/>
<dbReference type="GlyCosmos" id="Q63691">
    <property type="glycosylation" value="5 sites, No reported glycans"/>
</dbReference>
<dbReference type="GlyGen" id="Q63691">
    <property type="glycosylation" value="6 sites"/>
</dbReference>
<dbReference type="PhosphoSitePlus" id="Q63691"/>
<dbReference type="SwissPalm" id="Q63691"/>
<dbReference type="PaxDb" id="10116-ENSRNOP00000023977"/>
<dbReference type="Ensembl" id="ENSRNOT00000023977.7">
    <property type="protein sequence ID" value="ENSRNOP00000023977.3"/>
    <property type="gene ID" value="ENSRNOG00000017819.7"/>
</dbReference>
<dbReference type="GeneID" id="60350"/>
<dbReference type="KEGG" id="rno:60350"/>
<dbReference type="UCSC" id="RGD:620588">
    <property type="organism name" value="rat"/>
</dbReference>
<dbReference type="AGR" id="RGD:620588"/>
<dbReference type="CTD" id="929"/>
<dbReference type="RGD" id="620588">
    <property type="gene designation" value="Cd14"/>
</dbReference>
<dbReference type="eggNOG" id="ENOG502SNYQ">
    <property type="taxonomic scope" value="Eukaryota"/>
</dbReference>
<dbReference type="GeneTree" id="ENSGT00390000005689"/>
<dbReference type="HOGENOM" id="CLU_062152_0_0_1"/>
<dbReference type="InParanoid" id="Q63691"/>
<dbReference type="OMA" id="SSSCQWP"/>
<dbReference type="OrthoDB" id="15407at9989"/>
<dbReference type="PhylomeDB" id="Q63691"/>
<dbReference type="TreeFam" id="TF338550"/>
<dbReference type="Reactome" id="R-RNO-140534">
    <property type="pathway name" value="Caspase activation via Death Receptors in the presence of ligand"/>
</dbReference>
<dbReference type="Reactome" id="R-RNO-166016">
    <property type="pathway name" value="Toll Like Receptor 4 (TLR4) Cascade"/>
</dbReference>
<dbReference type="Reactome" id="R-RNO-166020">
    <property type="pathway name" value="Transfer of LPS from LBP carrier to CD14"/>
</dbReference>
<dbReference type="Reactome" id="R-RNO-166166">
    <property type="pathway name" value="MyD88-independent TLR4 cascade"/>
</dbReference>
<dbReference type="Reactome" id="R-RNO-2562578">
    <property type="pathway name" value="TRIF-mediated programmed cell death"/>
</dbReference>
<dbReference type="Reactome" id="R-RNO-5686938">
    <property type="pathway name" value="Regulation of TLR by endogenous ligand"/>
</dbReference>
<dbReference type="Reactome" id="R-RNO-6798695">
    <property type="pathway name" value="Neutrophil degranulation"/>
</dbReference>
<dbReference type="Reactome" id="R-RNO-936964">
    <property type="pathway name" value="Activation of IRF3, IRF7 mediated by TBK1, IKKEpsilon (IKBKE)"/>
</dbReference>
<dbReference type="Reactome" id="R-RNO-937041">
    <property type="pathway name" value="IKK complex recruitment mediated by RIP1"/>
</dbReference>
<dbReference type="Reactome" id="R-RNO-937072">
    <property type="pathway name" value="TRAF6-mediated induction of TAK1 complex within TLR4 complex"/>
</dbReference>
<dbReference type="Reactome" id="R-RNO-975163">
    <property type="pathway name" value="IRAK2 mediated activation of TAK1 complex upon TLR7/8 or 9 stimulation"/>
</dbReference>
<dbReference type="Reactome" id="R-RNO-9824878">
    <property type="pathway name" value="Regulation of TBK1, IKKEpsilon (IKBKE)-mediated activation of IRF3, IRF7"/>
</dbReference>
<dbReference type="PRO" id="PR:Q63691"/>
<dbReference type="Proteomes" id="UP000002494">
    <property type="component" value="Chromosome 18"/>
</dbReference>
<dbReference type="Bgee" id="ENSRNOG00000017819">
    <property type="expression patterns" value="Expressed in liver and 19 other cell types or tissues"/>
</dbReference>
<dbReference type="GO" id="GO:0009986">
    <property type="term" value="C:cell surface"/>
    <property type="evidence" value="ECO:0000314"/>
    <property type="project" value="RGD"/>
</dbReference>
<dbReference type="GO" id="GO:0009897">
    <property type="term" value="C:external side of plasma membrane"/>
    <property type="evidence" value="ECO:0000250"/>
    <property type="project" value="UniProtKB"/>
</dbReference>
<dbReference type="GO" id="GO:0005615">
    <property type="term" value="C:extracellular space"/>
    <property type="evidence" value="ECO:0000314"/>
    <property type="project" value="RGD"/>
</dbReference>
<dbReference type="GO" id="GO:0005794">
    <property type="term" value="C:Golgi apparatus"/>
    <property type="evidence" value="ECO:0000250"/>
    <property type="project" value="UniProtKB"/>
</dbReference>
<dbReference type="GO" id="GO:0046696">
    <property type="term" value="C:lipopolysaccharide receptor complex"/>
    <property type="evidence" value="ECO:0000250"/>
    <property type="project" value="UniProtKB"/>
</dbReference>
<dbReference type="GO" id="GO:0045121">
    <property type="term" value="C:membrane raft"/>
    <property type="evidence" value="ECO:0000250"/>
    <property type="project" value="UniProtKB"/>
</dbReference>
<dbReference type="GO" id="GO:0001530">
    <property type="term" value="F:lipopolysaccharide binding"/>
    <property type="evidence" value="ECO:0000266"/>
    <property type="project" value="RGD"/>
</dbReference>
<dbReference type="GO" id="GO:0001875">
    <property type="term" value="F:lipopolysaccharide immune receptor activity"/>
    <property type="evidence" value="ECO:0000266"/>
    <property type="project" value="RGD"/>
</dbReference>
<dbReference type="GO" id="GO:0070891">
    <property type="term" value="F:lipoteichoic acid binding"/>
    <property type="evidence" value="ECO:0000266"/>
    <property type="project" value="RGD"/>
</dbReference>
<dbReference type="GO" id="GO:0002752">
    <property type="term" value="P:cell surface pattern recognition receptor signaling pathway"/>
    <property type="evidence" value="ECO:0000266"/>
    <property type="project" value="RGD"/>
</dbReference>
<dbReference type="GO" id="GO:0071726">
    <property type="term" value="P:cellular response to diacyl bacterial lipopeptide"/>
    <property type="evidence" value="ECO:0000250"/>
    <property type="project" value="UniProtKB"/>
</dbReference>
<dbReference type="GO" id="GO:0071222">
    <property type="term" value="P:cellular response to lipopolysaccharide"/>
    <property type="evidence" value="ECO:0000270"/>
    <property type="project" value="RGD"/>
</dbReference>
<dbReference type="GO" id="GO:0071223">
    <property type="term" value="P:cellular response to lipoteichoic acid"/>
    <property type="evidence" value="ECO:0000266"/>
    <property type="project" value="RGD"/>
</dbReference>
<dbReference type="GO" id="GO:0071727">
    <property type="term" value="P:cellular response to triacyl bacterial lipopeptide"/>
    <property type="evidence" value="ECO:0000250"/>
    <property type="project" value="UniProtKB"/>
</dbReference>
<dbReference type="GO" id="GO:0006954">
    <property type="term" value="P:inflammatory response"/>
    <property type="evidence" value="ECO:0007669"/>
    <property type="project" value="UniProtKB-KW"/>
</dbReference>
<dbReference type="GO" id="GO:0045087">
    <property type="term" value="P:innate immune response"/>
    <property type="evidence" value="ECO:0007669"/>
    <property type="project" value="UniProtKB-KW"/>
</dbReference>
<dbReference type="GO" id="GO:0001819">
    <property type="term" value="P:positive regulation of cytokine production"/>
    <property type="evidence" value="ECO:0000315"/>
    <property type="project" value="RGD"/>
</dbReference>
<dbReference type="GO" id="GO:0045807">
    <property type="term" value="P:positive regulation of endocytosis"/>
    <property type="evidence" value="ECO:0000266"/>
    <property type="project" value="RGD"/>
</dbReference>
<dbReference type="GO" id="GO:0032757">
    <property type="term" value="P:positive regulation of interleukin-8 production"/>
    <property type="evidence" value="ECO:0000266"/>
    <property type="project" value="RGD"/>
</dbReference>
<dbReference type="GO" id="GO:0031666">
    <property type="term" value="P:positive regulation of lipopolysaccharide-mediated signaling pathway"/>
    <property type="evidence" value="ECO:0000250"/>
    <property type="project" value="UniProtKB"/>
</dbReference>
<dbReference type="GO" id="GO:0034145">
    <property type="term" value="P:positive regulation of toll-like receptor 4 signaling pathway"/>
    <property type="evidence" value="ECO:0000250"/>
    <property type="project" value="UniProtKB"/>
</dbReference>
<dbReference type="GO" id="GO:0032760">
    <property type="term" value="P:positive regulation of tumor necrosis factor production"/>
    <property type="evidence" value="ECO:0000250"/>
    <property type="project" value="UniProtKB"/>
</dbReference>
<dbReference type="GO" id="GO:0032481">
    <property type="term" value="P:positive regulation of type I interferon production"/>
    <property type="evidence" value="ECO:0000266"/>
    <property type="project" value="RGD"/>
</dbReference>
<dbReference type="GO" id="GO:0032729">
    <property type="term" value="P:positive regulation of type II interferon production"/>
    <property type="evidence" value="ECO:0000250"/>
    <property type="project" value="UniProtKB"/>
</dbReference>
<dbReference type="GO" id="GO:0006898">
    <property type="term" value="P:receptor-mediated endocytosis"/>
    <property type="evidence" value="ECO:0000266"/>
    <property type="project" value="RGD"/>
</dbReference>
<dbReference type="GO" id="GO:0009617">
    <property type="term" value="P:response to bacterium"/>
    <property type="evidence" value="ECO:0000250"/>
    <property type="project" value="UniProtKB"/>
</dbReference>
<dbReference type="GO" id="GO:0051602">
    <property type="term" value="P:response to electrical stimulus"/>
    <property type="evidence" value="ECO:0000270"/>
    <property type="project" value="RGD"/>
</dbReference>
<dbReference type="GO" id="GO:0045471">
    <property type="term" value="P:response to ethanol"/>
    <property type="evidence" value="ECO:0000270"/>
    <property type="project" value="RGD"/>
</dbReference>
<dbReference type="GO" id="GO:0032496">
    <property type="term" value="P:response to lipopolysaccharide"/>
    <property type="evidence" value="ECO:0000270"/>
    <property type="project" value="RGD"/>
</dbReference>
<dbReference type="GO" id="GO:0032026">
    <property type="term" value="P:response to magnesium ion"/>
    <property type="evidence" value="ECO:0000270"/>
    <property type="project" value="RGD"/>
</dbReference>
<dbReference type="GO" id="GO:0002237">
    <property type="term" value="P:response to molecule of bacterial origin"/>
    <property type="evidence" value="ECO:0000266"/>
    <property type="project" value="RGD"/>
</dbReference>
<dbReference type="GO" id="GO:0034612">
    <property type="term" value="P:response to tumor necrosis factor"/>
    <property type="evidence" value="ECO:0000315"/>
    <property type="project" value="RGD"/>
</dbReference>
<dbReference type="GO" id="GO:0034142">
    <property type="term" value="P:toll-like receptor 4 signaling pathway"/>
    <property type="evidence" value="ECO:0000266"/>
    <property type="project" value="RGD"/>
</dbReference>
<dbReference type="FunFam" id="3.80.10.10:FF:000244">
    <property type="entry name" value="Monocyte differentiation antigen CD14"/>
    <property type="match status" value="1"/>
</dbReference>
<dbReference type="Gene3D" id="3.80.10.10">
    <property type="entry name" value="Ribonuclease Inhibitor"/>
    <property type="match status" value="1"/>
</dbReference>
<dbReference type="InterPro" id="IPR001611">
    <property type="entry name" value="Leu-rich_rpt"/>
</dbReference>
<dbReference type="InterPro" id="IPR032675">
    <property type="entry name" value="LRR_dom_sf"/>
</dbReference>
<dbReference type="InterPro" id="IPR016337">
    <property type="entry name" value="Monocyte_diff_Ag_CD14"/>
</dbReference>
<dbReference type="PANTHER" id="PTHR10630">
    <property type="entry name" value="MONOCYTE DIFFERENTIATION ANTIGEN CD14"/>
    <property type="match status" value="1"/>
</dbReference>
<dbReference type="PANTHER" id="PTHR10630:SF3">
    <property type="entry name" value="MONOCYTE DIFFERENTIATION ANTIGEN CD14"/>
    <property type="match status" value="1"/>
</dbReference>
<dbReference type="PIRSF" id="PIRSF002017">
    <property type="entry name" value="CD14"/>
    <property type="match status" value="1"/>
</dbReference>
<dbReference type="PRINTS" id="PR00019">
    <property type="entry name" value="LEURICHRPT"/>
</dbReference>
<dbReference type="SUPFAM" id="SSF52047">
    <property type="entry name" value="RNI-like"/>
    <property type="match status" value="1"/>
</dbReference>
<dbReference type="PROSITE" id="PS51450">
    <property type="entry name" value="LRR"/>
    <property type="match status" value="4"/>
</dbReference>
<gene>
    <name type="primary">Cd14</name>
</gene>